<dbReference type="EC" id="6.5.1.2" evidence="1"/>
<dbReference type="EMBL" id="CP000890">
    <property type="protein sequence ID" value="ABX79044.1"/>
    <property type="molecule type" value="Genomic_DNA"/>
</dbReference>
<dbReference type="SMR" id="A9NC33"/>
<dbReference type="KEGG" id="cbs:COXBURSA331_A0655"/>
<dbReference type="HOGENOM" id="CLU_007764_2_1_6"/>
<dbReference type="GO" id="GO:0005829">
    <property type="term" value="C:cytosol"/>
    <property type="evidence" value="ECO:0007669"/>
    <property type="project" value="TreeGrafter"/>
</dbReference>
<dbReference type="GO" id="GO:0003677">
    <property type="term" value="F:DNA binding"/>
    <property type="evidence" value="ECO:0007669"/>
    <property type="project" value="InterPro"/>
</dbReference>
<dbReference type="GO" id="GO:0003911">
    <property type="term" value="F:DNA ligase (NAD+) activity"/>
    <property type="evidence" value="ECO:0007669"/>
    <property type="project" value="UniProtKB-UniRule"/>
</dbReference>
<dbReference type="GO" id="GO:0046872">
    <property type="term" value="F:metal ion binding"/>
    <property type="evidence" value="ECO:0007669"/>
    <property type="project" value="UniProtKB-KW"/>
</dbReference>
<dbReference type="GO" id="GO:0006281">
    <property type="term" value="P:DNA repair"/>
    <property type="evidence" value="ECO:0007669"/>
    <property type="project" value="UniProtKB-KW"/>
</dbReference>
<dbReference type="GO" id="GO:0006260">
    <property type="term" value="P:DNA replication"/>
    <property type="evidence" value="ECO:0007669"/>
    <property type="project" value="UniProtKB-KW"/>
</dbReference>
<dbReference type="CDD" id="cd17748">
    <property type="entry name" value="BRCT_DNA_ligase_like"/>
    <property type="match status" value="1"/>
</dbReference>
<dbReference type="CDD" id="cd00114">
    <property type="entry name" value="LIGANc"/>
    <property type="match status" value="1"/>
</dbReference>
<dbReference type="FunFam" id="1.10.150.20:FF:000006">
    <property type="entry name" value="DNA ligase"/>
    <property type="match status" value="1"/>
</dbReference>
<dbReference type="FunFam" id="1.10.150.20:FF:000007">
    <property type="entry name" value="DNA ligase"/>
    <property type="match status" value="1"/>
</dbReference>
<dbReference type="FunFam" id="1.10.287.610:FF:000002">
    <property type="entry name" value="DNA ligase"/>
    <property type="match status" value="1"/>
</dbReference>
<dbReference type="FunFam" id="2.40.50.140:FF:000012">
    <property type="entry name" value="DNA ligase"/>
    <property type="match status" value="1"/>
</dbReference>
<dbReference type="FunFam" id="3.30.470.30:FF:000001">
    <property type="entry name" value="DNA ligase"/>
    <property type="match status" value="1"/>
</dbReference>
<dbReference type="FunFam" id="3.40.50.10190:FF:000086">
    <property type="entry name" value="DNA ligase"/>
    <property type="match status" value="1"/>
</dbReference>
<dbReference type="Gene3D" id="6.20.10.30">
    <property type="match status" value="1"/>
</dbReference>
<dbReference type="Gene3D" id="1.10.150.20">
    <property type="entry name" value="5' to 3' exonuclease, C-terminal subdomain"/>
    <property type="match status" value="2"/>
</dbReference>
<dbReference type="Gene3D" id="3.40.50.10190">
    <property type="entry name" value="BRCT domain"/>
    <property type="match status" value="1"/>
</dbReference>
<dbReference type="Gene3D" id="3.30.470.30">
    <property type="entry name" value="DNA ligase/mRNA capping enzyme"/>
    <property type="match status" value="1"/>
</dbReference>
<dbReference type="Gene3D" id="1.10.287.610">
    <property type="entry name" value="Helix hairpin bin"/>
    <property type="match status" value="1"/>
</dbReference>
<dbReference type="Gene3D" id="2.40.50.140">
    <property type="entry name" value="Nucleic acid-binding proteins"/>
    <property type="match status" value="1"/>
</dbReference>
<dbReference type="HAMAP" id="MF_01588">
    <property type="entry name" value="DNA_ligase_A"/>
    <property type="match status" value="1"/>
</dbReference>
<dbReference type="InterPro" id="IPR001357">
    <property type="entry name" value="BRCT_dom"/>
</dbReference>
<dbReference type="InterPro" id="IPR036420">
    <property type="entry name" value="BRCT_dom_sf"/>
</dbReference>
<dbReference type="InterPro" id="IPR041663">
    <property type="entry name" value="DisA/LigA_HHH"/>
</dbReference>
<dbReference type="InterPro" id="IPR001679">
    <property type="entry name" value="DNA_ligase"/>
</dbReference>
<dbReference type="InterPro" id="IPR018239">
    <property type="entry name" value="DNA_ligase_AS"/>
</dbReference>
<dbReference type="InterPro" id="IPR033136">
    <property type="entry name" value="DNA_ligase_CS"/>
</dbReference>
<dbReference type="InterPro" id="IPR013839">
    <property type="entry name" value="DNAligase_adenylation"/>
</dbReference>
<dbReference type="InterPro" id="IPR013840">
    <property type="entry name" value="DNAligase_N"/>
</dbReference>
<dbReference type="InterPro" id="IPR003583">
    <property type="entry name" value="Hlx-hairpin-Hlx_DNA-bd_motif"/>
</dbReference>
<dbReference type="InterPro" id="IPR012340">
    <property type="entry name" value="NA-bd_OB-fold"/>
</dbReference>
<dbReference type="InterPro" id="IPR004150">
    <property type="entry name" value="NAD_DNA_ligase_OB"/>
</dbReference>
<dbReference type="InterPro" id="IPR010994">
    <property type="entry name" value="RuvA_2-like"/>
</dbReference>
<dbReference type="InterPro" id="IPR004149">
    <property type="entry name" value="Znf_DNAligase_C4"/>
</dbReference>
<dbReference type="NCBIfam" id="TIGR00575">
    <property type="entry name" value="dnlj"/>
    <property type="match status" value="1"/>
</dbReference>
<dbReference type="NCBIfam" id="NF005932">
    <property type="entry name" value="PRK07956.1"/>
    <property type="match status" value="1"/>
</dbReference>
<dbReference type="PANTHER" id="PTHR23389">
    <property type="entry name" value="CHROMOSOME TRANSMISSION FIDELITY FACTOR 18"/>
    <property type="match status" value="1"/>
</dbReference>
<dbReference type="PANTHER" id="PTHR23389:SF9">
    <property type="entry name" value="DNA LIGASE"/>
    <property type="match status" value="1"/>
</dbReference>
<dbReference type="Pfam" id="PF00533">
    <property type="entry name" value="BRCT"/>
    <property type="match status" value="1"/>
</dbReference>
<dbReference type="Pfam" id="PF01653">
    <property type="entry name" value="DNA_ligase_aden"/>
    <property type="match status" value="1"/>
</dbReference>
<dbReference type="Pfam" id="PF03120">
    <property type="entry name" value="DNA_ligase_OB"/>
    <property type="match status" value="1"/>
</dbReference>
<dbReference type="Pfam" id="PF03119">
    <property type="entry name" value="DNA_ligase_ZBD"/>
    <property type="match status" value="1"/>
</dbReference>
<dbReference type="Pfam" id="PF12826">
    <property type="entry name" value="HHH_2"/>
    <property type="match status" value="1"/>
</dbReference>
<dbReference type="Pfam" id="PF14520">
    <property type="entry name" value="HHH_5"/>
    <property type="match status" value="1"/>
</dbReference>
<dbReference type="Pfam" id="PF22745">
    <property type="entry name" value="Nlig-Ia"/>
    <property type="match status" value="1"/>
</dbReference>
<dbReference type="PIRSF" id="PIRSF001604">
    <property type="entry name" value="LigA"/>
    <property type="match status" value="1"/>
</dbReference>
<dbReference type="SMART" id="SM00292">
    <property type="entry name" value="BRCT"/>
    <property type="match status" value="1"/>
</dbReference>
<dbReference type="SMART" id="SM00278">
    <property type="entry name" value="HhH1"/>
    <property type="match status" value="4"/>
</dbReference>
<dbReference type="SMART" id="SM00532">
    <property type="entry name" value="LIGANc"/>
    <property type="match status" value="1"/>
</dbReference>
<dbReference type="SUPFAM" id="SSF52113">
    <property type="entry name" value="BRCT domain"/>
    <property type="match status" value="1"/>
</dbReference>
<dbReference type="SUPFAM" id="SSF56091">
    <property type="entry name" value="DNA ligase/mRNA capping enzyme, catalytic domain"/>
    <property type="match status" value="1"/>
</dbReference>
<dbReference type="SUPFAM" id="SSF50249">
    <property type="entry name" value="Nucleic acid-binding proteins"/>
    <property type="match status" value="1"/>
</dbReference>
<dbReference type="SUPFAM" id="SSF47781">
    <property type="entry name" value="RuvA domain 2-like"/>
    <property type="match status" value="1"/>
</dbReference>
<dbReference type="PROSITE" id="PS50172">
    <property type="entry name" value="BRCT"/>
    <property type="match status" value="1"/>
</dbReference>
<dbReference type="PROSITE" id="PS01055">
    <property type="entry name" value="DNA_LIGASE_N1"/>
    <property type="match status" value="1"/>
</dbReference>
<dbReference type="PROSITE" id="PS01056">
    <property type="entry name" value="DNA_LIGASE_N2"/>
    <property type="match status" value="1"/>
</dbReference>
<keyword id="KW-0227">DNA damage</keyword>
<keyword id="KW-0234">DNA repair</keyword>
<keyword id="KW-0235">DNA replication</keyword>
<keyword id="KW-0436">Ligase</keyword>
<keyword id="KW-0460">Magnesium</keyword>
<keyword id="KW-0464">Manganese</keyword>
<keyword id="KW-0479">Metal-binding</keyword>
<keyword id="KW-0520">NAD</keyword>
<keyword id="KW-0862">Zinc</keyword>
<proteinExistence type="inferred from homology"/>
<comment type="function">
    <text evidence="1">DNA ligase that catalyzes the formation of phosphodiester linkages between 5'-phosphoryl and 3'-hydroxyl groups in double-stranded DNA using NAD as a coenzyme and as the energy source for the reaction. It is essential for DNA replication and repair of damaged DNA.</text>
</comment>
<comment type="catalytic activity">
    <reaction evidence="1">
        <text>NAD(+) + (deoxyribonucleotide)n-3'-hydroxyl + 5'-phospho-(deoxyribonucleotide)m = (deoxyribonucleotide)n+m + AMP + beta-nicotinamide D-nucleotide.</text>
        <dbReference type="EC" id="6.5.1.2"/>
    </reaction>
</comment>
<comment type="cofactor">
    <cofactor evidence="1">
        <name>Mg(2+)</name>
        <dbReference type="ChEBI" id="CHEBI:18420"/>
    </cofactor>
    <cofactor evidence="1">
        <name>Mn(2+)</name>
        <dbReference type="ChEBI" id="CHEBI:29035"/>
    </cofactor>
</comment>
<comment type="similarity">
    <text evidence="1">Belongs to the NAD-dependent DNA ligase family. LigA subfamily.</text>
</comment>
<name>DNLJ_COXBR</name>
<protein>
    <recommendedName>
        <fullName evidence="1">DNA ligase</fullName>
        <ecNumber evidence="1">6.5.1.2</ecNumber>
    </recommendedName>
    <alternativeName>
        <fullName evidence="1">Polydeoxyribonucleotide synthase [NAD(+)]</fullName>
    </alternativeName>
</protein>
<feature type="chain" id="PRO_0000340343" description="DNA ligase">
    <location>
        <begin position="1"/>
        <end position="670"/>
    </location>
</feature>
<feature type="domain" description="BRCT" evidence="1">
    <location>
        <begin position="592"/>
        <end position="670"/>
    </location>
</feature>
<feature type="active site" description="N6-AMP-lysine intermediate" evidence="1">
    <location>
        <position position="118"/>
    </location>
</feature>
<feature type="binding site" evidence="1">
    <location>
        <begin position="35"/>
        <end position="39"/>
    </location>
    <ligand>
        <name>NAD(+)</name>
        <dbReference type="ChEBI" id="CHEBI:57540"/>
    </ligand>
</feature>
<feature type="binding site" evidence="1">
    <location>
        <begin position="84"/>
        <end position="85"/>
    </location>
    <ligand>
        <name>NAD(+)</name>
        <dbReference type="ChEBI" id="CHEBI:57540"/>
    </ligand>
</feature>
<feature type="binding site" evidence="1">
    <location>
        <position position="116"/>
    </location>
    <ligand>
        <name>NAD(+)</name>
        <dbReference type="ChEBI" id="CHEBI:57540"/>
    </ligand>
</feature>
<feature type="binding site" evidence="1">
    <location>
        <position position="139"/>
    </location>
    <ligand>
        <name>NAD(+)</name>
        <dbReference type="ChEBI" id="CHEBI:57540"/>
    </ligand>
</feature>
<feature type="binding site" evidence="1">
    <location>
        <position position="176"/>
    </location>
    <ligand>
        <name>NAD(+)</name>
        <dbReference type="ChEBI" id="CHEBI:57540"/>
    </ligand>
</feature>
<feature type="binding site" evidence="1">
    <location>
        <position position="293"/>
    </location>
    <ligand>
        <name>NAD(+)</name>
        <dbReference type="ChEBI" id="CHEBI:57540"/>
    </ligand>
</feature>
<feature type="binding site" evidence="1">
    <location>
        <position position="317"/>
    </location>
    <ligand>
        <name>NAD(+)</name>
        <dbReference type="ChEBI" id="CHEBI:57540"/>
    </ligand>
</feature>
<feature type="binding site" evidence="1">
    <location>
        <position position="411"/>
    </location>
    <ligand>
        <name>Zn(2+)</name>
        <dbReference type="ChEBI" id="CHEBI:29105"/>
    </ligand>
</feature>
<feature type="binding site" evidence="1">
    <location>
        <position position="414"/>
    </location>
    <ligand>
        <name>Zn(2+)</name>
        <dbReference type="ChEBI" id="CHEBI:29105"/>
    </ligand>
</feature>
<feature type="binding site" evidence="1">
    <location>
        <position position="429"/>
    </location>
    <ligand>
        <name>Zn(2+)</name>
        <dbReference type="ChEBI" id="CHEBI:29105"/>
    </ligand>
</feature>
<feature type="binding site" evidence="1">
    <location>
        <position position="435"/>
    </location>
    <ligand>
        <name>Zn(2+)</name>
        <dbReference type="ChEBI" id="CHEBI:29105"/>
    </ligand>
</feature>
<accession>A9NC33</accession>
<sequence length="670" mass="75301">MEVPAKIQKRIERLRHEINDHNYRYYVLSQPTIPDSVYDELFHELEKLEKKYPETITPSSPTQRVGAEPLKVFEPVHHEIPMLSLDNVFDEKGLRAFDKRIRQRLKLDKPFEYVCEPKMDGVALSLLYENGELIRAATRGDGYTGENVTQNTRTIASVPLQLRGNDYPELVEIRGEVLMPREGFAKFNREAEKRGDKTFANPRNAASGSLRQLDPRITAKRPLIFYGYLIGLLKGKDFPKNHCDVLKWFKDWGIPVISEIKVVGGIEGCLDYYEHLVKTREKMPFDIDGIVIKVNSLQVQAELGFVSRAPRWAIAYKFPAQEKMTVVKAIEFQVGRTGAVTPVARLEPVSVSGVTVSNATLHNFDELYRKDVRVGDTVIVRRAGDVIPEVVGPILAKRPKKAKLIKIPSRCPVCHAEVIKPEGEAVARCVGGLYCRAQLRESIKHFSSRRALDIEGLGDKLVELFIQEKLIKDITGIYQLKKSAITALPRMGEKSAENLLTAIEKSKKTTLPRFLYALGIRGVGDTTARTLARHFHELDLLMKASIETLQEIRDIGPVAAENIHAFFHQKNNAELINKLIHLGVHWPQEKAVVKSEIAGKTFVLTGALKSLTREEAEEKIERSGGKATSSVSKNTDYVIVGENPGSKYEKAKALGISLIDEEAFLKLLKS</sequence>
<organism>
    <name type="scientific">Coxiella burnetii (strain RSA 331 / Henzerling II)</name>
    <dbReference type="NCBI Taxonomy" id="360115"/>
    <lineage>
        <taxon>Bacteria</taxon>
        <taxon>Pseudomonadati</taxon>
        <taxon>Pseudomonadota</taxon>
        <taxon>Gammaproteobacteria</taxon>
        <taxon>Legionellales</taxon>
        <taxon>Coxiellaceae</taxon>
        <taxon>Coxiella</taxon>
    </lineage>
</organism>
<gene>
    <name evidence="1" type="primary">ligA</name>
    <name type="ordered locus">COXBURSA331_A0655</name>
</gene>
<reference key="1">
    <citation type="submission" date="2007-11" db="EMBL/GenBank/DDBJ databases">
        <title>Genome sequencing of phylogenetically and phenotypically diverse Coxiella burnetii isolates.</title>
        <authorList>
            <person name="Seshadri R."/>
            <person name="Samuel J.E."/>
        </authorList>
    </citation>
    <scope>NUCLEOTIDE SEQUENCE [LARGE SCALE GENOMIC DNA]</scope>
    <source>
        <strain>RSA 331 / Henzerling II</strain>
    </source>
</reference>
<evidence type="ECO:0000255" key="1">
    <source>
        <dbReference type="HAMAP-Rule" id="MF_01588"/>
    </source>
</evidence>